<name>MOTA_TREPH</name>
<reference key="1">
    <citation type="journal article" date="1996" name="J. Bacteriol.">
        <title>Organization, transcription, and expression of the 5' region of the fla operon of Treponema phagedenis and Treponema pallidum.</title>
        <authorList>
            <person name="Limberger R.J."/>
            <person name="Slivienski L.L."/>
            <person name="El-Afandi M.C.T."/>
            <person name="Dantuono L.A."/>
        </authorList>
    </citation>
    <scope>NUCLEOTIDE SEQUENCE [GENOMIC DNA]</scope>
    <source>
        <strain>Kazan 5</strain>
    </source>
</reference>
<reference key="2">
    <citation type="journal article" date="1994" name="J. Bacteriol.">
        <title>Genetic and biochemical analysis of the flagellar hook of Treponema phagedenis.</title>
        <authorList>
            <person name="Limberger R.J."/>
            <person name="Slivienski L.L."/>
            <person name="Samsonoff W.A."/>
        </authorList>
    </citation>
    <scope>NUCLEOTIDE SEQUENCE [GENOMIC DNA] OF 1-159</scope>
    <source>
        <strain>Kazan 5</strain>
    </source>
</reference>
<comment type="function">
    <text evidence="1">MotA and MotB comprise the stator element of the flagellar motor complex. Required for rotation of the flagellar motor. Probable transmembrane proton channel (By similarity).</text>
</comment>
<comment type="subunit">
    <text evidence="1">Each stator complex is composed of 4 MotA and 2 MotB subunits. 2 A subunits and 1 B subunit are thought to form a single ion channel, so that each stator complex contains two channels (By similarity).</text>
</comment>
<comment type="subcellular location">
    <subcellularLocation>
        <location evidence="1">Cell inner membrane</location>
        <topology evidence="3">Multi-pass membrane protein</topology>
    </subcellularLocation>
</comment>
<comment type="similarity">
    <text evidence="3">Belongs to the MotA family.</text>
</comment>
<evidence type="ECO:0000250" key="1"/>
<evidence type="ECO:0000255" key="2"/>
<evidence type="ECO:0000305" key="3"/>
<accession>Q56331</accession>
<accession>Q56327</accession>
<gene>
    <name type="primary">motA</name>
</gene>
<keyword id="KW-0997">Cell inner membrane</keyword>
<keyword id="KW-1003">Cell membrane</keyword>
<keyword id="KW-0145">Chemotaxis</keyword>
<keyword id="KW-0283">Flagellar rotation</keyword>
<keyword id="KW-0375">Hydrogen ion transport</keyword>
<keyword id="KW-0406">Ion transport</keyword>
<keyword id="KW-0472">Membrane</keyword>
<keyword id="KW-0812">Transmembrane</keyword>
<keyword id="KW-1133">Transmembrane helix</keyword>
<keyword id="KW-0813">Transport</keyword>
<sequence>MDLASFIGFFGAFAIILMGGILGGSASGFFHLPSVFITVGGSYLTLFLAYPLSYTLGIFKVCARVFKSADFHEKEIVQRLYALAEKSRRTGLLALEEEIQDFDDEFMRTGLRNVVDGIDGEAIRNLMENELSHMEERHNRWISFINAWATLAPGYGMLGTVMGLIGMLMALEDKSSLGQNMAVALVTTLYGSLMANWLLIPMATKLGLQHEAEVKSKEMIIEGVLAIQAGDHPRILAQRLLVYLNPKDKRELEAELIKD</sequence>
<feature type="chain" id="PRO_0000189579" description="Motility protein A">
    <location>
        <begin position="1"/>
        <end position="259"/>
    </location>
</feature>
<feature type="transmembrane region" description="Helical" evidence="2">
    <location>
        <begin position="3"/>
        <end position="23"/>
    </location>
</feature>
<feature type="transmembrane region" description="Helical" evidence="2">
    <location>
        <begin position="28"/>
        <end position="48"/>
    </location>
</feature>
<feature type="transmembrane region" description="Helical" evidence="2">
    <location>
        <begin position="148"/>
        <end position="168"/>
    </location>
</feature>
<feature type="transmembrane region" description="Helical" evidence="2">
    <location>
        <begin position="184"/>
        <end position="204"/>
    </location>
</feature>
<feature type="topological domain" description="Cytoplasmic" evidence="2">
    <location>
        <begin position="205"/>
        <end position="259"/>
    </location>
</feature>
<organism>
    <name type="scientific">Treponema phagedenis</name>
    <dbReference type="NCBI Taxonomy" id="162"/>
    <lineage>
        <taxon>Bacteria</taxon>
        <taxon>Pseudomonadati</taxon>
        <taxon>Spirochaetota</taxon>
        <taxon>Spirochaetia</taxon>
        <taxon>Spirochaetales</taxon>
        <taxon>Treponemataceae</taxon>
        <taxon>Treponema</taxon>
    </lineage>
</organism>
<dbReference type="EMBL" id="U32475">
    <property type="protein sequence ID" value="AAB03250.1"/>
    <property type="molecule type" value="Genomic_DNA"/>
</dbReference>
<dbReference type="EMBL" id="U04619">
    <property type="protein sequence ID" value="AAA73468.1"/>
    <property type="molecule type" value="Genomic_DNA"/>
</dbReference>
<dbReference type="RefSeq" id="WP_002700959.1">
    <property type="nucleotide sequence ID" value="NZ_VOQA01000001.1"/>
</dbReference>
<dbReference type="SMR" id="Q56331"/>
<dbReference type="OrthoDB" id="9806929at2"/>
<dbReference type="GO" id="GO:0005886">
    <property type="term" value="C:plasma membrane"/>
    <property type="evidence" value="ECO:0007669"/>
    <property type="project" value="UniProtKB-SubCell"/>
</dbReference>
<dbReference type="GO" id="GO:0071978">
    <property type="term" value="P:bacterial-type flagellum-dependent swarming motility"/>
    <property type="evidence" value="ECO:0007669"/>
    <property type="project" value="InterPro"/>
</dbReference>
<dbReference type="GO" id="GO:0006935">
    <property type="term" value="P:chemotaxis"/>
    <property type="evidence" value="ECO:0007669"/>
    <property type="project" value="UniProtKB-KW"/>
</dbReference>
<dbReference type="GO" id="GO:1902600">
    <property type="term" value="P:proton transmembrane transport"/>
    <property type="evidence" value="ECO:0007669"/>
    <property type="project" value="UniProtKB-KW"/>
</dbReference>
<dbReference type="InterPro" id="IPR000540">
    <property type="entry name" value="Flag_MotA_CS"/>
</dbReference>
<dbReference type="InterPro" id="IPR047055">
    <property type="entry name" value="MotA-like"/>
</dbReference>
<dbReference type="InterPro" id="IPR002898">
    <property type="entry name" value="MotA_ExbB_proton_chnl"/>
</dbReference>
<dbReference type="PANTHER" id="PTHR30433">
    <property type="entry name" value="CHEMOTAXIS PROTEIN MOTA"/>
    <property type="match status" value="1"/>
</dbReference>
<dbReference type="PANTHER" id="PTHR30433:SF2">
    <property type="entry name" value="MOTILITY PROTEIN A"/>
    <property type="match status" value="1"/>
</dbReference>
<dbReference type="Pfam" id="PF01618">
    <property type="entry name" value="MotA_ExbB"/>
    <property type="match status" value="1"/>
</dbReference>
<dbReference type="PROSITE" id="PS01307">
    <property type="entry name" value="MOTA"/>
    <property type="match status" value="1"/>
</dbReference>
<protein>
    <recommendedName>
        <fullName>Motility protein A</fullName>
    </recommendedName>
    <alternativeName>
        <fullName>Chemotaxis protein MotA</fullName>
    </alternativeName>
</protein>
<proteinExistence type="inferred from homology"/>